<reference key="1">
    <citation type="submission" date="2005-10" db="EMBL/GenBank/DDBJ databases">
        <authorList>
            <consortium name="NIH - Xenopus Gene Collection (XGC) project"/>
        </authorList>
    </citation>
    <scope>NUCLEOTIDE SEQUENCE [LARGE SCALE MRNA]</scope>
    <source>
        <tissue>Embryo</tissue>
    </source>
</reference>
<protein>
    <recommendedName>
        <fullName>Pre-mRNA-splicing factor SLU7</fullName>
    </recommendedName>
</protein>
<dbReference type="EMBL" id="BC072156">
    <property type="protein sequence ID" value="AAH72156.1"/>
    <property type="status" value="ALT_INIT"/>
    <property type="molecule type" value="mRNA"/>
</dbReference>
<dbReference type="EMBL" id="BC106270">
    <property type="protein sequence ID" value="AAI06271.1"/>
    <property type="status" value="ALT_FRAME"/>
    <property type="molecule type" value="mRNA"/>
</dbReference>
<dbReference type="RefSeq" id="XP_018107531.1">
    <property type="nucleotide sequence ID" value="XM_018252042.1"/>
</dbReference>
<dbReference type="SMR" id="Q3KQD1"/>
<dbReference type="IntAct" id="Q3KQD1">
    <property type="interactions" value="1"/>
</dbReference>
<dbReference type="GeneID" id="432205"/>
<dbReference type="KEGG" id="xla:432205"/>
<dbReference type="AGR" id="Xenbase:XB-GENE-994052"/>
<dbReference type="CTD" id="432205"/>
<dbReference type="Xenbase" id="XB-GENE-994052">
    <property type="gene designation" value="slu7.L"/>
</dbReference>
<dbReference type="OMA" id="KYAWESQ"/>
<dbReference type="OrthoDB" id="249612at2759"/>
<dbReference type="Proteomes" id="UP000186698">
    <property type="component" value="Chromosome 3L"/>
</dbReference>
<dbReference type="Bgee" id="432205">
    <property type="expression patterns" value="Expressed in pancreas and 19 other cell types or tissues"/>
</dbReference>
<dbReference type="GO" id="GO:0005737">
    <property type="term" value="C:cytoplasm"/>
    <property type="evidence" value="ECO:0007669"/>
    <property type="project" value="UniProtKB-SubCell"/>
</dbReference>
<dbReference type="GO" id="GO:0016607">
    <property type="term" value="C:nuclear speck"/>
    <property type="evidence" value="ECO:0007669"/>
    <property type="project" value="UniProtKB-SubCell"/>
</dbReference>
<dbReference type="GO" id="GO:0005681">
    <property type="term" value="C:spliceosomal complex"/>
    <property type="evidence" value="ECO:0000318"/>
    <property type="project" value="GO_Central"/>
</dbReference>
<dbReference type="GO" id="GO:0030628">
    <property type="term" value="F:pre-mRNA 3'-splice site binding"/>
    <property type="evidence" value="ECO:0007669"/>
    <property type="project" value="InterPro"/>
</dbReference>
<dbReference type="GO" id="GO:0008270">
    <property type="term" value="F:zinc ion binding"/>
    <property type="evidence" value="ECO:0007669"/>
    <property type="project" value="UniProtKB-KW"/>
</dbReference>
<dbReference type="GO" id="GO:0000398">
    <property type="term" value="P:mRNA splicing, via spliceosome"/>
    <property type="evidence" value="ECO:0007669"/>
    <property type="project" value="InterPro"/>
</dbReference>
<dbReference type="GO" id="GO:0008380">
    <property type="term" value="P:RNA splicing"/>
    <property type="evidence" value="ECO:0000318"/>
    <property type="project" value="GO_Central"/>
</dbReference>
<dbReference type="InterPro" id="IPR021715">
    <property type="entry name" value="Slu7_dom"/>
</dbReference>
<dbReference type="InterPro" id="IPR039974">
    <property type="entry name" value="Splicing_factor_SLU7"/>
</dbReference>
<dbReference type="PANTHER" id="PTHR12942:SF2">
    <property type="entry name" value="PRE-MRNA-SPLICING FACTOR SLU7"/>
    <property type="match status" value="1"/>
</dbReference>
<dbReference type="PANTHER" id="PTHR12942">
    <property type="entry name" value="STEP II SPLICING FACTOR SLU7"/>
    <property type="match status" value="1"/>
</dbReference>
<dbReference type="Pfam" id="PF11708">
    <property type="entry name" value="Slu7"/>
    <property type="match status" value="1"/>
</dbReference>
<accession>Q3KQD1</accession>
<accession>Q6INW6</accession>
<evidence type="ECO:0000250" key="1">
    <source>
        <dbReference type="UniProtKB" id="O95391"/>
    </source>
</evidence>
<evidence type="ECO:0000256" key="2">
    <source>
        <dbReference type="SAM" id="MobiDB-lite"/>
    </source>
</evidence>
<evidence type="ECO:0000305" key="3"/>
<sequence length="580" mass="67405">MLGGTDIMATPQGGEPGGLEEPKKMTREDWRKKKELEEQRKLGNAPAEVDEEGKDINPHIPQYISSVPWYVDPSKRPTLKHQRPQDEKQKYFSQMDEWYKKGVKEGSITTKYRQGACENCGSLTHKKKDCFERPRRVGARFTGVSIAPDEYEQPQLMLDYDGKRDRWNGYNPEEHTRIVEEHSKVDLAKRTLKAQKLQEELASGKLSEQVSSPRHQWGEDEQNSQTEKDRNSEDEDEDKYADDIDMPGQNFDSKRRITVRNLRIREDTAKYLRNLNLNSAYYDPKTRAMRGNPYADAGKTPEEVSYAGDNFVRYTGDTISMAQTQLFAWEAYEKGSDVHLQADPTKLEVLAQSFKVKKEDFEHEQKKSILEKYGGQEHLNIPPVELLLAQTEDYVEYSRHGTVIKGQEKAVAKSKYEEDILINNHTCIWGSYWKDGRWGYKCCHSFVKMSYCTGEAGKDINNTDICEEDLMPTEEEMTKPKTLVEIHQEKLKDKKKKKKHRKSGDSDSDNDEKKKKDKLKKALNAEEARLKQVEEMMQLDERKRGYNSVYESREPTEEEMEAYRMKRLRPDDPMASFLGK</sequence>
<feature type="chain" id="PRO_0000289200" description="Pre-mRNA-splicing factor SLU7">
    <location>
        <begin position="1"/>
        <end position="580"/>
    </location>
</feature>
<feature type="zinc finger region" description="CCHC-type">
    <location>
        <begin position="115"/>
        <end position="132"/>
    </location>
</feature>
<feature type="region of interest" description="Disordered" evidence="2">
    <location>
        <begin position="1"/>
        <end position="59"/>
    </location>
</feature>
<feature type="region of interest" description="Disordered" evidence="2">
    <location>
        <begin position="200"/>
        <end position="252"/>
    </location>
</feature>
<feature type="region of interest" description="Disordered" evidence="2">
    <location>
        <begin position="488"/>
        <end position="580"/>
    </location>
</feature>
<feature type="compositionally biased region" description="Basic and acidic residues" evidence="2">
    <location>
        <begin position="20"/>
        <end position="41"/>
    </location>
</feature>
<feature type="compositionally biased region" description="Acidic residues" evidence="2">
    <location>
        <begin position="232"/>
        <end position="245"/>
    </location>
</feature>
<feature type="compositionally biased region" description="Basic residues" evidence="2">
    <location>
        <begin position="493"/>
        <end position="502"/>
    </location>
</feature>
<feature type="compositionally biased region" description="Basic and acidic residues" evidence="2">
    <location>
        <begin position="523"/>
        <end position="544"/>
    </location>
</feature>
<feature type="compositionally biased region" description="Basic and acidic residues" evidence="2">
    <location>
        <begin position="551"/>
        <end position="572"/>
    </location>
</feature>
<organism>
    <name type="scientific">Xenopus laevis</name>
    <name type="common">African clawed frog</name>
    <dbReference type="NCBI Taxonomy" id="8355"/>
    <lineage>
        <taxon>Eukaryota</taxon>
        <taxon>Metazoa</taxon>
        <taxon>Chordata</taxon>
        <taxon>Craniata</taxon>
        <taxon>Vertebrata</taxon>
        <taxon>Euteleostomi</taxon>
        <taxon>Amphibia</taxon>
        <taxon>Batrachia</taxon>
        <taxon>Anura</taxon>
        <taxon>Pipoidea</taxon>
        <taxon>Pipidae</taxon>
        <taxon>Xenopodinae</taxon>
        <taxon>Xenopus</taxon>
        <taxon>Xenopus</taxon>
    </lineage>
</organism>
<comment type="function">
    <text evidence="1">Required for pre-mRNA splicing as component of the spliceosome. Participates in the second catalytic step of pre-mRNA splicing, when the free hydroxyl group of exon I attacks the 3'-splice site to generate spliced mRNA and the excised lariat intron. Required for holding exon 1 properly in the spliceosome and for correct AG identification when more than one possible AG exists in 3'-splicing site region. May be involved in the activation of proximal AG. Probably also involved in alternative splicing regulation.</text>
</comment>
<comment type="subunit">
    <text evidence="1">Component of pre-catalytic, catalytic and post-catalytic spliceosomes. Associates with the spliceosome prior to recognition of the 3'-splice site for step II, probably during catalysis of step I.</text>
</comment>
<comment type="subcellular location">
    <subcellularLocation>
        <location evidence="1">Nucleus</location>
    </subcellularLocation>
    <subcellularLocation>
        <location evidence="1">Nucleus speckle</location>
    </subcellularLocation>
    <subcellularLocation>
        <location evidence="1">Cytoplasm</location>
    </subcellularLocation>
    <text evidence="1">Predominantly nuclear.</text>
</comment>
<comment type="similarity">
    <text evidence="3">Belongs to the SLU7 family.</text>
</comment>
<comment type="sequence caution" evidence="3">
    <conflict type="erroneous initiation">
        <sequence resource="EMBL-CDS" id="AAH72156"/>
    </conflict>
</comment>
<comment type="sequence caution" evidence="3">
    <conflict type="frameshift">
        <sequence resource="EMBL-CDS" id="AAI06271"/>
    </conflict>
</comment>
<keyword id="KW-0963">Cytoplasm</keyword>
<keyword id="KW-0479">Metal-binding</keyword>
<keyword id="KW-0507">mRNA processing</keyword>
<keyword id="KW-0508">mRNA splicing</keyword>
<keyword id="KW-0539">Nucleus</keyword>
<keyword id="KW-1185">Reference proteome</keyword>
<keyword id="KW-0747">Spliceosome</keyword>
<keyword id="KW-0862">Zinc</keyword>
<keyword id="KW-0863">Zinc-finger</keyword>
<proteinExistence type="evidence at transcript level"/>
<gene>
    <name type="primary">slu7</name>
</gene>
<name>SLU7_XENLA</name>